<sequence>MPYSLEEQTYFMQEALKEAEKSLQKAEIPIGCVIVKDGEIIGRGHNAREESNQAIMHAEMMAINEANAHEGNWRLLDTTLFVTIEPCVMCSGAIGLARIPHVIYGASNQKFGGADSLYQILTDERLNHRVQVERGLLAADCANIMQTFFRQGRERKKIAKHLIKEQSDPFD</sequence>
<organism>
    <name type="scientific">Streptococcus pyogenes serotype M3 (strain ATCC BAA-595 / MGAS315)</name>
    <dbReference type="NCBI Taxonomy" id="198466"/>
    <lineage>
        <taxon>Bacteria</taxon>
        <taxon>Bacillati</taxon>
        <taxon>Bacillota</taxon>
        <taxon>Bacilli</taxon>
        <taxon>Lactobacillales</taxon>
        <taxon>Streptococcaceae</taxon>
        <taxon>Streptococcus</taxon>
    </lineage>
</organism>
<name>TADA_STRP3</name>
<comment type="function">
    <text evidence="1">Catalyzes the deamination of adenosine to inosine at the wobble position 34 of tRNA(Arg2).</text>
</comment>
<comment type="catalytic activity">
    <reaction evidence="1">
        <text>adenosine(34) in tRNA + H2O + H(+) = inosine(34) in tRNA + NH4(+)</text>
        <dbReference type="Rhea" id="RHEA:43168"/>
        <dbReference type="Rhea" id="RHEA-COMP:10373"/>
        <dbReference type="Rhea" id="RHEA-COMP:10374"/>
        <dbReference type="ChEBI" id="CHEBI:15377"/>
        <dbReference type="ChEBI" id="CHEBI:15378"/>
        <dbReference type="ChEBI" id="CHEBI:28938"/>
        <dbReference type="ChEBI" id="CHEBI:74411"/>
        <dbReference type="ChEBI" id="CHEBI:82852"/>
        <dbReference type="EC" id="3.5.4.33"/>
    </reaction>
</comment>
<comment type="cofactor">
    <cofactor evidence="1">
        <name>Zn(2+)</name>
        <dbReference type="ChEBI" id="CHEBI:29105"/>
    </cofactor>
    <text evidence="1">Binds 1 zinc ion per subunit.</text>
</comment>
<comment type="subunit">
    <text evidence="1">Homodimer.</text>
</comment>
<comment type="similarity">
    <text evidence="1">Belongs to the cytidine and deoxycytidylate deaminase family.</text>
</comment>
<dbReference type="EC" id="3.5.4.33" evidence="1"/>
<dbReference type="EMBL" id="AE014074">
    <property type="protein sequence ID" value="AAM78760.1"/>
    <property type="molecule type" value="Genomic_DNA"/>
</dbReference>
<dbReference type="RefSeq" id="WP_002992549.1">
    <property type="nucleotide sequence ID" value="NC_004070.1"/>
</dbReference>
<dbReference type="SMR" id="P0DA20"/>
<dbReference type="GeneID" id="69900154"/>
<dbReference type="KEGG" id="spg:SpyM3_0153"/>
<dbReference type="HOGENOM" id="CLU_025810_3_2_9"/>
<dbReference type="Proteomes" id="UP000000564">
    <property type="component" value="Chromosome"/>
</dbReference>
<dbReference type="GO" id="GO:0052717">
    <property type="term" value="F:tRNA-specific adenosine-34 deaminase activity"/>
    <property type="evidence" value="ECO:0007669"/>
    <property type="project" value="UniProtKB-UniRule"/>
</dbReference>
<dbReference type="GO" id="GO:0008270">
    <property type="term" value="F:zinc ion binding"/>
    <property type="evidence" value="ECO:0007669"/>
    <property type="project" value="UniProtKB-UniRule"/>
</dbReference>
<dbReference type="GO" id="GO:0002100">
    <property type="term" value="P:tRNA wobble adenosine to inosine editing"/>
    <property type="evidence" value="ECO:0007669"/>
    <property type="project" value="UniProtKB-UniRule"/>
</dbReference>
<dbReference type="CDD" id="cd01285">
    <property type="entry name" value="nucleoside_deaminase"/>
    <property type="match status" value="1"/>
</dbReference>
<dbReference type="FunFam" id="3.40.140.10:FF:000005">
    <property type="entry name" value="tRNA-specific adenosine deaminase"/>
    <property type="match status" value="1"/>
</dbReference>
<dbReference type="Gene3D" id="3.40.140.10">
    <property type="entry name" value="Cytidine Deaminase, domain 2"/>
    <property type="match status" value="1"/>
</dbReference>
<dbReference type="HAMAP" id="MF_00972">
    <property type="entry name" value="tRNA_aden_deaminase"/>
    <property type="match status" value="1"/>
</dbReference>
<dbReference type="InterPro" id="IPR016192">
    <property type="entry name" value="APOBEC/CMP_deaminase_Zn-bd"/>
</dbReference>
<dbReference type="InterPro" id="IPR002125">
    <property type="entry name" value="CMP_dCMP_dom"/>
</dbReference>
<dbReference type="InterPro" id="IPR016193">
    <property type="entry name" value="Cytidine_deaminase-like"/>
</dbReference>
<dbReference type="InterPro" id="IPR028883">
    <property type="entry name" value="tRNA_aden_deaminase"/>
</dbReference>
<dbReference type="NCBIfam" id="NF008113">
    <property type="entry name" value="PRK10860.1"/>
    <property type="match status" value="1"/>
</dbReference>
<dbReference type="PANTHER" id="PTHR11079">
    <property type="entry name" value="CYTOSINE DEAMINASE FAMILY MEMBER"/>
    <property type="match status" value="1"/>
</dbReference>
<dbReference type="PANTHER" id="PTHR11079:SF202">
    <property type="entry name" value="TRNA-SPECIFIC ADENOSINE DEAMINASE"/>
    <property type="match status" value="1"/>
</dbReference>
<dbReference type="Pfam" id="PF14437">
    <property type="entry name" value="MafB19-deam"/>
    <property type="match status" value="1"/>
</dbReference>
<dbReference type="SUPFAM" id="SSF53927">
    <property type="entry name" value="Cytidine deaminase-like"/>
    <property type="match status" value="1"/>
</dbReference>
<dbReference type="PROSITE" id="PS00903">
    <property type="entry name" value="CYT_DCMP_DEAMINASES_1"/>
    <property type="match status" value="1"/>
</dbReference>
<dbReference type="PROSITE" id="PS51747">
    <property type="entry name" value="CYT_DCMP_DEAMINASES_2"/>
    <property type="match status" value="1"/>
</dbReference>
<keyword id="KW-0378">Hydrolase</keyword>
<keyword id="KW-0479">Metal-binding</keyword>
<keyword id="KW-0819">tRNA processing</keyword>
<keyword id="KW-0862">Zinc</keyword>
<proteinExistence type="inferred from homology"/>
<protein>
    <recommendedName>
        <fullName evidence="1">tRNA-specific adenosine deaminase</fullName>
        <ecNumber evidence="1">3.5.4.33</ecNumber>
    </recommendedName>
</protein>
<feature type="chain" id="PRO_0000171708" description="tRNA-specific adenosine deaminase">
    <location>
        <begin position="1"/>
        <end position="171"/>
    </location>
</feature>
<feature type="domain" description="CMP/dCMP-type deaminase" evidence="2">
    <location>
        <begin position="6"/>
        <end position="133"/>
    </location>
</feature>
<feature type="active site" description="Proton donor" evidence="1">
    <location>
        <position position="59"/>
    </location>
</feature>
<feature type="binding site" evidence="1">
    <location>
        <position position="57"/>
    </location>
    <ligand>
        <name>Zn(2+)</name>
        <dbReference type="ChEBI" id="CHEBI:29105"/>
        <note>catalytic</note>
    </ligand>
</feature>
<feature type="binding site" evidence="1">
    <location>
        <position position="87"/>
    </location>
    <ligand>
        <name>Zn(2+)</name>
        <dbReference type="ChEBI" id="CHEBI:29105"/>
        <note>catalytic</note>
    </ligand>
</feature>
<feature type="binding site" evidence="1">
    <location>
        <position position="90"/>
    </location>
    <ligand>
        <name>Zn(2+)</name>
        <dbReference type="ChEBI" id="CHEBI:29105"/>
        <note>catalytic</note>
    </ligand>
</feature>
<reference key="1">
    <citation type="journal article" date="2002" name="Proc. Natl. Acad. Sci. U.S.A.">
        <title>Genome sequence of a serotype M3 strain of group A Streptococcus: phage-encoded toxins, the high-virulence phenotype, and clone emergence.</title>
        <authorList>
            <person name="Beres S.B."/>
            <person name="Sylva G.L."/>
            <person name="Barbian K.D."/>
            <person name="Lei B."/>
            <person name="Hoff J.S."/>
            <person name="Mammarella N.D."/>
            <person name="Liu M.-Y."/>
            <person name="Smoot J.C."/>
            <person name="Porcella S.F."/>
            <person name="Parkins L.D."/>
            <person name="Campbell D.S."/>
            <person name="Smith T.M."/>
            <person name="McCormick J.K."/>
            <person name="Leung D.Y.M."/>
            <person name="Schlievert P.M."/>
            <person name="Musser J.M."/>
        </authorList>
    </citation>
    <scope>NUCLEOTIDE SEQUENCE [LARGE SCALE GENOMIC DNA]</scope>
    <source>
        <strain>ATCC BAA-595 / MGAS315</strain>
    </source>
</reference>
<gene>
    <name evidence="1" type="primary">tadA</name>
    <name type="ordered locus">SpyM3_0153</name>
</gene>
<evidence type="ECO:0000255" key="1">
    <source>
        <dbReference type="HAMAP-Rule" id="MF_00972"/>
    </source>
</evidence>
<evidence type="ECO:0000255" key="2">
    <source>
        <dbReference type="PROSITE-ProRule" id="PRU01083"/>
    </source>
</evidence>
<accession>P0DA20</accession>
<accession>Q879N4</accession>
<accession>Q8K8Q9</accession>